<dbReference type="EMBL" id="X96983">
    <property type="protein sequence ID" value="CAA65701.1"/>
    <property type="molecule type" value="Genomic_DNA"/>
</dbReference>
<dbReference type="EMBL" id="AL009126">
    <property type="protein sequence ID" value="CAB12746.1"/>
    <property type="molecule type" value="Genomic_DNA"/>
</dbReference>
<dbReference type="PIR" id="E69823">
    <property type="entry name" value="E69823"/>
</dbReference>
<dbReference type="RefSeq" id="NP_388799.1">
    <property type="nucleotide sequence ID" value="NC_000964.3"/>
</dbReference>
<dbReference type="RefSeq" id="WP_009966881.1">
    <property type="nucleotide sequence ID" value="NZ_OZ025638.1"/>
</dbReference>
<dbReference type="SMR" id="P54601"/>
<dbReference type="FunCoup" id="P54601">
    <property type="interactions" value="50"/>
</dbReference>
<dbReference type="IntAct" id="P54601">
    <property type="interactions" value="1"/>
</dbReference>
<dbReference type="STRING" id="224308.BSU09180"/>
<dbReference type="PaxDb" id="224308-BSU09180"/>
<dbReference type="EnsemblBacteria" id="CAB12746">
    <property type="protein sequence ID" value="CAB12746"/>
    <property type="gene ID" value="BSU_09180"/>
</dbReference>
<dbReference type="GeneID" id="936236"/>
<dbReference type="KEGG" id="bsu:BSU09180"/>
<dbReference type="PATRIC" id="fig|224308.43.peg.959"/>
<dbReference type="eggNOG" id="COG5577">
    <property type="taxonomic scope" value="Bacteria"/>
</dbReference>
<dbReference type="InParanoid" id="P54601"/>
<dbReference type="OrthoDB" id="2577233at2"/>
<dbReference type="BioCyc" id="BSUB:BSU09180-MONOMER"/>
<dbReference type="Proteomes" id="UP000001570">
    <property type="component" value="Chromosome"/>
</dbReference>
<dbReference type="GO" id="GO:0030435">
    <property type="term" value="P:sporulation resulting in formation of a cellular spore"/>
    <property type="evidence" value="ECO:0007669"/>
    <property type="project" value="UniProtKB-KW"/>
</dbReference>
<dbReference type="Gene3D" id="1.20.1260.10">
    <property type="match status" value="1"/>
</dbReference>
<dbReference type="InterPro" id="IPR012347">
    <property type="entry name" value="Ferritin-like"/>
</dbReference>
<dbReference type="InterPro" id="IPR012851">
    <property type="entry name" value="Spore_coat_CotF-like"/>
</dbReference>
<dbReference type="PANTHER" id="PTHR39183">
    <property type="entry name" value="SPORE COAT PROTEIN F-LIKE PROTEIN YHCQ"/>
    <property type="match status" value="1"/>
</dbReference>
<dbReference type="PANTHER" id="PTHR39183:SF1">
    <property type="entry name" value="SPORE COAT PROTEIN F-LIKE PROTEIN YHCQ"/>
    <property type="match status" value="1"/>
</dbReference>
<dbReference type="Pfam" id="PF07875">
    <property type="entry name" value="Coat_F"/>
    <property type="match status" value="1"/>
</dbReference>
<protein>
    <recommendedName>
        <fullName>Spore coat protein F-like protein YhcQ</fullName>
    </recommendedName>
</protein>
<sequence length="217" mass="24791">MDQFNQQQQSQMNKGIPGKPHKNHGGHEMFDMHEVLSGTLTVLDQFMMLRQFCKDQELLNILDRQHQFITSQYNITAECFKTGSEPSQKTATYMMKEDNQTVYGMQPSQPKKPVQSMNDIDDSIISRQMLCAIKAQASMLTMASLEMTNPAVRRVLSAQIQEYVEMAFEIFLYQNKHGYYQVPQLDAQDMEQLRNSFAPAQGQMPPTQGGMGQQGLH</sequence>
<gene>
    <name type="primary">yhcQ</name>
    <name type="ordered locus">BSU09180</name>
</gene>
<feature type="chain" id="PRO_0000049565" description="Spore coat protein F-like protein YhcQ">
    <location>
        <begin position="1"/>
        <end position="217"/>
    </location>
</feature>
<feature type="region of interest" description="Disordered" evidence="2">
    <location>
        <begin position="1"/>
        <end position="28"/>
    </location>
</feature>
<feature type="compositionally biased region" description="Low complexity" evidence="2">
    <location>
        <begin position="1"/>
        <end position="11"/>
    </location>
</feature>
<organism>
    <name type="scientific">Bacillus subtilis (strain 168)</name>
    <dbReference type="NCBI Taxonomy" id="224308"/>
    <lineage>
        <taxon>Bacteria</taxon>
        <taxon>Bacillati</taxon>
        <taxon>Bacillota</taxon>
        <taxon>Bacilli</taxon>
        <taxon>Bacillales</taxon>
        <taxon>Bacillaceae</taxon>
        <taxon>Bacillus</taxon>
    </lineage>
</organism>
<keyword id="KW-1185">Reference proteome</keyword>
<keyword id="KW-0749">Sporulation</keyword>
<evidence type="ECO:0000250" key="1"/>
<evidence type="ECO:0000256" key="2">
    <source>
        <dbReference type="SAM" id="MobiDB-lite"/>
    </source>
</evidence>
<evidence type="ECO:0000305" key="3"/>
<reference key="1">
    <citation type="journal article" date="1996" name="Microbiology">
        <title>A 22 kb DNA sequence in the cspB-glpPFKD region at 75 degrees on the Bacillus subtilis chromosome.</title>
        <authorList>
            <person name="Noback M.A."/>
            <person name="Terpstra P."/>
            <person name="Holsappel S."/>
            <person name="Venema G."/>
            <person name="Bron S."/>
        </authorList>
    </citation>
    <scope>NUCLEOTIDE SEQUENCE [GENOMIC DNA]</scope>
    <source>
        <strain>168</strain>
    </source>
</reference>
<reference key="2">
    <citation type="journal article" date="1997" name="Nature">
        <title>The complete genome sequence of the Gram-positive bacterium Bacillus subtilis.</title>
        <authorList>
            <person name="Kunst F."/>
            <person name="Ogasawara N."/>
            <person name="Moszer I."/>
            <person name="Albertini A.M."/>
            <person name="Alloni G."/>
            <person name="Azevedo V."/>
            <person name="Bertero M.G."/>
            <person name="Bessieres P."/>
            <person name="Bolotin A."/>
            <person name="Borchert S."/>
            <person name="Borriss R."/>
            <person name="Boursier L."/>
            <person name="Brans A."/>
            <person name="Braun M."/>
            <person name="Brignell S.C."/>
            <person name="Bron S."/>
            <person name="Brouillet S."/>
            <person name="Bruschi C.V."/>
            <person name="Caldwell B."/>
            <person name="Capuano V."/>
            <person name="Carter N.M."/>
            <person name="Choi S.-K."/>
            <person name="Codani J.-J."/>
            <person name="Connerton I.F."/>
            <person name="Cummings N.J."/>
            <person name="Daniel R.A."/>
            <person name="Denizot F."/>
            <person name="Devine K.M."/>
            <person name="Duesterhoeft A."/>
            <person name="Ehrlich S.D."/>
            <person name="Emmerson P.T."/>
            <person name="Entian K.-D."/>
            <person name="Errington J."/>
            <person name="Fabret C."/>
            <person name="Ferrari E."/>
            <person name="Foulger D."/>
            <person name="Fritz C."/>
            <person name="Fujita M."/>
            <person name="Fujita Y."/>
            <person name="Fuma S."/>
            <person name="Galizzi A."/>
            <person name="Galleron N."/>
            <person name="Ghim S.-Y."/>
            <person name="Glaser P."/>
            <person name="Goffeau A."/>
            <person name="Golightly E.J."/>
            <person name="Grandi G."/>
            <person name="Guiseppi G."/>
            <person name="Guy B.J."/>
            <person name="Haga K."/>
            <person name="Haiech J."/>
            <person name="Harwood C.R."/>
            <person name="Henaut A."/>
            <person name="Hilbert H."/>
            <person name="Holsappel S."/>
            <person name="Hosono S."/>
            <person name="Hullo M.-F."/>
            <person name="Itaya M."/>
            <person name="Jones L.-M."/>
            <person name="Joris B."/>
            <person name="Karamata D."/>
            <person name="Kasahara Y."/>
            <person name="Klaerr-Blanchard M."/>
            <person name="Klein C."/>
            <person name="Kobayashi Y."/>
            <person name="Koetter P."/>
            <person name="Koningstein G."/>
            <person name="Krogh S."/>
            <person name="Kumano M."/>
            <person name="Kurita K."/>
            <person name="Lapidus A."/>
            <person name="Lardinois S."/>
            <person name="Lauber J."/>
            <person name="Lazarevic V."/>
            <person name="Lee S.-M."/>
            <person name="Levine A."/>
            <person name="Liu H."/>
            <person name="Masuda S."/>
            <person name="Mauel C."/>
            <person name="Medigue C."/>
            <person name="Medina N."/>
            <person name="Mellado R.P."/>
            <person name="Mizuno M."/>
            <person name="Moestl D."/>
            <person name="Nakai S."/>
            <person name="Noback M."/>
            <person name="Noone D."/>
            <person name="O'Reilly M."/>
            <person name="Ogawa K."/>
            <person name="Ogiwara A."/>
            <person name="Oudega B."/>
            <person name="Park S.-H."/>
            <person name="Parro V."/>
            <person name="Pohl T.M."/>
            <person name="Portetelle D."/>
            <person name="Porwollik S."/>
            <person name="Prescott A.M."/>
            <person name="Presecan E."/>
            <person name="Pujic P."/>
            <person name="Purnelle B."/>
            <person name="Rapoport G."/>
            <person name="Rey M."/>
            <person name="Reynolds S."/>
            <person name="Rieger M."/>
            <person name="Rivolta C."/>
            <person name="Rocha E."/>
            <person name="Roche B."/>
            <person name="Rose M."/>
            <person name="Sadaie Y."/>
            <person name="Sato T."/>
            <person name="Scanlan E."/>
            <person name="Schleich S."/>
            <person name="Schroeter R."/>
            <person name="Scoffone F."/>
            <person name="Sekiguchi J."/>
            <person name="Sekowska A."/>
            <person name="Seror S.J."/>
            <person name="Serror P."/>
            <person name="Shin B.-S."/>
            <person name="Soldo B."/>
            <person name="Sorokin A."/>
            <person name="Tacconi E."/>
            <person name="Takagi T."/>
            <person name="Takahashi H."/>
            <person name="Takemaru K."/>
            <person name="Takeuchi M."/>
            <person name="Tamakoshi A."/>
            <person name="Tanaka T."/>
            <person name="Terpstra P."/>
            <person name="Tognoni A."/>
            <person name="Tosato V."/>
            <person name="Uchiyama S."/>
            <person name="Vandenbol M."/>
            <person name="Vannier F."/>
            <person name="Vassarotti A."/>
            <person name="Viari A."/>
            <person name="Wambutt R."/>
            <person name="Wedler E."/>
            <person name="Wedler H."/>
            <person name="Weitzenegger T."/>
            <person name="Winters P."/>
            <person name="Wipat A."/>
            <person name="Yamamoto H."/>
            <person name="Yamane K."/>
            <person name="Yasumoto K."/>
            <person name="Yata K."/>
            <person name="Yoshida K."/>
            <person name="Yoshikawa H.-F."/>
            <person name="Zumstein E."/>
            <person name="Yoshikawa H."/>
            <person name="Danchin A."/>
        </authorList>
    </citation>
    <scope>NUCLEOTIDE SEQUENCE [LARGE SCALE GENOMIC DNA]</scope>
    <source>
        <strain>168</strain>
    </source>
</reference>
<accession>P54601</accession>
<name>YHCQ_BACSU</name>
<proteinExistence type="inferred from homology"/>
<comment type="subcellular location">
    <subcellularLocation>
        <location evidence="1">Spore coat</location>
    </subcellularLocation>
</comment>
<comment type="similarity">
    <text evidence="3">Belongs to the CotF family.</text>
</comment>